<reference key="1">
    <citation type="submission" date="2005-10" db="EMBL/GenBank/DDBJ databases">
        <authorList>
            <consortium name="NIH - Xenopus Gene Collection (XGC) project"/>
        </authorList>
    </citation>
    <scope>NUCLEOTIDE SEQUENCE [LARGE SCALE MRNA]</scope>
    <source>
        <tissue>Oocyte</tissue>
    </source>
</reference>
<sequence length="1083" mass="122183">MASNAALQGEDIPQPQESPPDTACMEAQKWIEQVTGKSFGDRDFRTGLENGILLCELLNAIKPGLVKKINRLPTPIAGLDNITLFLRGCKELGLKESQLFDPGDLQDTANRTTGRTSDCNRKLRNVLVTVYWLGKAANGCSSFSGTNLDLKEFEGLLAQIRKENEEIESPKRSIRDSGYIDCWDSERSDSLSPPRHGRDDSFDSLDSFGSRSQQTPSPDVVLRGSSDGRGSDSESDLPHRRIPDVRKDDMSARRVSFGENKAFVPFNQYLPNKNNQTAYIPAPLRKKKAEREDYRKSWSTATSPLGGERPFRSMSMCDMRYEEEGSMLPHSRAHHEHLQHVNSLLKEEDDTWQDDLARWKTRRRSASQDLIKKEEERKKMERLMSGDSELSDRRKSIKTYREIVEEKERREKELHVAYKNAKTRGEAERILKSYIEKFTISEAVLEGLVMPKILERSQSVEPSLLSSSEDPNPLKYLRQQSLPSPKYTSTVEATVTPSSPCESKSPTGLISPSKNIISKTVPMLTAKPYSQPKNTQEVLKTFKVDGKVNLNGVEEQKGKESGSQTFAAPSLTRSQMFEGVARVDAPVVETKQDVASIKLNLARPNTLNSLHESNSLCEDRNHISQKDEPDSFVQEESVHSVEQLSEGNTQSNSTTQAVPAVSSIEIPPLTVNGKDTEDKRKVEAAELIMHWSLDSNYKEAKKNSLPPLKSSENVEESSKIKENESSHKVQLNITLQTRNAWRRSQFFLQSVDTECTEKSPALVPNLSSPNRSCTWDPEEERKRQEKWQQEQERLLQERYQKEQEKLKEEWEKAQKEVEEEERKYYEEERKIIEDTVVPLTLSPNSNVHFNISERNGNFIPVLPDHAKRDQENNNGQLMAEPNRVIKNEIHMHSNVTQQQILYAHERSMLAAEETQIKGKTEKWEAEPCNHVQSNECNTPTRLTLQAGCKQVMLSESCDLGSPKTPVDENAVHHNMSSIISTRGIDSKEETLNSSQSTSQCQSPNRSVSGKKLCSTCGLPLGKGAAMIIETLSLYFHIQCFKCGLCKGQLGDATTGTDVRIRNGLLNCNDCYVKSRTAGHPTPL</sequence>
<protein>
    <recommendedName>
        <fullName evidence="6">LIM and calponin homology domains-containing protein 1</fullName>
    </recommendedName>
</protein>
<keyword id="KW-0175">Coiled coil</keyword>
<keyword id="KW-0963">Cytoplasm</keyword>
<keyword id="KW-0206">Cytoskeleton</keyword>
<keyword id="KW-0440">LIM domain</keyword>
<keyword id="KW-0479">Metal-binding</keyword>
<keyword id="KW-1185">Reference proteome</keyword>
<keyword id="KW-0862">Zinc</keyword>
<proteinExistence type="evidence at transcript level"/>
<name>LIMC1_XENLA</name>
<evidence type="ECO:0000250" key="1">
    <source>
        <dbReference type="UniProtKB" id="Q9UPQ0"/>
    </source>
</evidence>
<evidence type="ECO:0000255" key="2"/>
<evidence type="ECO:0000255" key="3">
    <source>
        <dbReference type="PROSITE-ProRule" id="PRU00044"/>
    </source>
</evidence>
<evidence type="ECO:0000255" key="4">
    <source>
        <dbReference type="PROSITE-ProRule" id="PRU00125"/>
    </source>
</evidence>
<evidence type="ECO:0000256" key="5">
    <source>
        <dbReference type="SAM" id="MobiDB-lite"/>
    </source>
</evidence>
<evidence type="ECO:0000305" key="6"/>
<gene>
    <name type="primary">limch1</name>
</gene>
<accession>Q3KQW7</accession>
<comment type="function">
    <text evidence="1">Actin stress fibers-associated protein that activates non-muscle myosin IIa. Through the activation of non-muscle myosin IIa, positively regulates actin stress fibers assembly and stabilizes focal adhesions. It therefore negatively regulates cell spreading and cell migration.</text>
</comment>
<comment type="subcellular location">
    <subcellularLocation>
        <location evidence="1">Cytoplasm</location>
        <location evidence="1">Cytoskeleton</location>
        <location evidence="1">Stress fiber</location>
    </subcellularLocation>
</comment>
<comment type="similarity">
    <text evidence="6">Belongs to the LIMCH1 family.</text>
</comment>
<organism>
    <name type="scientific">Xenopus laevis</name>
    <name type="common">African clawed frog</name>
    <dbReference type="NCBI Taxonomy" id="8355"/>
    <lineage>
        <taxon>Eukaryota</taxon>
        <taxon>Metazoa</taxon>
        <taxon>Chordata</taxon>
        <taxon>Craniata</taxon>
        <taxon>Vertebrata</taxon>
        <taxon>Euteleostomi</taxon>
        <taxon>Amphibia</taxon>
        <taxon>Batrachia</taxon>
        <taxon>Anura</taxon>
        <taxon>Pipoidea</taxon>
        <taxon>Pipidae</taxon>
        <taxon>Xenopodinae</taxon>
        <taxon>Xenopus</taxon>
        <taxon>Xenopus</taxon>
    </lineage>
</organism>
<feature type="chain" id="PRO_0000293621" description="LIM and calponin homology domains-containing protein 1">
    <location>
        <begin position="1"/>
        <end position="1083"/>
    </location>
</feature>
<feature type="domain" description="Calponin-homology (CH)" evidence="3">
    <location>
        <begin position="21"/>
        <end position="138"/>
    </location>
</feature>
<feature type="domain" description="LIM zinc-binding" evidence="4">
    <location>
        <begin position="1011"/>
        <end position="1077"/>
    </location>
</feature>
<feature type="region of interest" description="Disordered" evidence="5">
    <location>
        <begin position="1"/>
        <end position="22"/>
    </location>
</feature>
<feature type="region of interest" description="Disordered" evidence="5">
    <location>
        <begin position="185"/>
        <end position="248"/>
    </location>
</feature>
<feature type="region of interest" description="Disordered" evidence="5">
    <location>
        <begin position="291"/>
        <end position="311"/>
    </location>
</feature>
<feature type="region of interest" description="Disordered" evidence="5">
    <location>
        <begin position="462"/>
        <end position="512"/>
    </location>
</feature>
<feature type="region of interest" description="Disordered" evidence="5">
    <location>
        <begin position="625"/>
        <end position="661"/>
    </location>
</feature>
<feature type="region of interest" description="Disordered" evidence="5">
    <location>
        <begin position="698"/>
        <end position="725"/>
    </location>
</feature>
<feature type="region of interest" description="Disordered" evidence="5">
    <location>
        <begin position="759"/>
        <end position="779"/>
    </location>
</feature>
<feature type="region of interest" description="Disordered" evidence="5">
    <location>
        <begin position="987"/>
        <end position="1006"/>
    </location>
</feature>
<feature type="coiled-coil region" evidence="2">
    <location>
        <begin position="356"/>
        <end position="424"/>
    </location>
</feature>
<feature type="coiled-coil region" evidence="2">
    <location>
        <begin position="784"/>
        <end position="835"/>
    </location>
</feature>
<feature type="compositionally biased region" description="Basic and acidic residues" evidence="5">
    <location>
        <begin position="229"/>
        <end position="248"/>
    </location>
</feature>
<feature type="compositionally biased region" description="Low complexity" evidence="5">
    <location>
        <begin position="462"/>
        <end position="474"/>
    </location>
</feature>
<feature type="compositionally biased region" description="Polar residues" evidence="5">
    <location>
        <begin position="478"/>
        <end position="512"/>
    </location>
</feature>
<feature type="compositionally biased region" description="Polar residues" evidence="5">
    <location>
        <begin position="640"/>
        <end position="657"/>
    </location>
</feature>
<feature type="compositionally biased region" description="Basic and acidic residues" evidence="5">
    <location>
        <begin position="716"/>
        <end position="725"/>
    </location>
</feature>
<feature type="compositionally biased region" description="Polar residues" evidence="5">
    <location>
        <begin position="991"/>
        <end position="1006"/>
    </location>
</feature>
<dbReference type="EMBL" id="BC106026">
    <property type="protein sequence ID" value="AAI06027.1"/>
    <property type="molecule type" value="mRNA"/>
</dbReference>
<dbReference type="RefSeq" id="NP_001089675.1">
    <property type="nucleotide sequence ID" value="NM_001096206.1"/>
</dbReference>
<dbReference type="SMR" id="Q3KQW7"/>
<dbReference type="BioGRID" id="592517">
    <property type="interactions" value="1"/>
</dbReference>
<dbReference type="GeneID" id="734736"/>
<dbReference type="KEGG" id="xla:734736"/>
<dbReference type="AGR" id="Xenbase:XB-GENE-5950315"/>
<dbReference type="CTD" id="734736"/>
<dbReference type="Xenbase" id="XB-GENE-5950315">
    <property type="gene designation" value="limch1.L"/>
</dbReference>
<dbReference type="OrthoDB" id="15627at2759"/>
<dbReference type="Proteomes" id="UP000186698">
    <property type="component" value="Chromosome 1L"/>
</dbReference>
<dbReference type="Bgee" id="734736">
    <property type="expression patterns" value="Expressed in muscle tissue and 19 other cell types or tissues"/>
</dbReference>
<dbReference type="GO" id="GO:0005737">
    <property type="term" value="C:cytoplasm"/>
    <property type="evidence" value="ECO:0007669"/>
    <property type="project" value="UniProtKB-KW"/>
</dbReference>
<dbReference type="GO" id="GO:0001725">
    <property type="term" value="C:stress fiber"/>
    <property type="evidence" value="ECO:0000250"/>
    <property type="project" value="UniProtKB"/>
</dbReference>
<dbReference type="GO" id="GO:0003779">
    <property type="term" value="F:actin binding"/>
    <property type="evidence" value="ECO:0007669"/>
    <property type="project" value="InterPro"/>
</dbReference>
<dbReference type="GO" id="GO:0046872">
    <property type="term" value="F:metal ion binding"/>
    <property type="evidence" value="ECO:0007669"/>
    <property type="project" value="UniProtKB-KW"/>
</dbReference>
<dbReference type="GO" id="GO:0032034">
    <property type="term" value="F:myosin II head/neck binding"/>
    <property type="evidence" value="ECO:0000318"/>
    <property type="project" value="GO_Central"/>
</dbReference>
<dbReference type="GO" id="GO:0031032">
    <property type="term" value="P:actomyosin structure organization"/>
    <property type="evidence" value="ECO:0007669"/>
    <property type="project" value="InterPro"/>
</dbReference>
<dbReference type="GO" id="GO:0030336">
    <property type="term" value="P:negative regulation of cell migration"/>
    <property type="evidence" value="ECO:0000250"/>
    <property type="project" value="UniProtKB"/>
</dbReference>
<dbReference type="GO" id="GO:0001934">
    <property type="term" value="P:positive regulation of protein phosphorylation"/>
    <property type="evidence" value="ECO:0000250"/>
    <property type="project" value="UniProtKB"/>
</dbReference>
<dbReference type="GO" id="GO:0051496">
    <property type="term" value="P:positive regulation of stress fiber assembly"/>
    <property type="evidence" value="ECO:0000250"/>
    <property type="project" value="UniProtKB"/>
</dbReference>
<dbReference type="GO" id="GO:0051893">
    <property type="term" value="P:regulation of focal adhesion assembly"/>
    <property type="evidence" value="ECO:0000250"/>
    <property type="project" value="UniProtKB"/>
</dbReference>
<dbReference type="CDD" id="cd21278">
    <property type="entry name" value="CH_LIMCH1"/>
    <property type="match status" value="1"/>
</dbReference>
<dbReference type="CDD" id="cd08368">
    <property type="entry name" value="LIM"/>
    <property type="match status" value="1"/>
</dbReference>
<dbReference type="FunFam" id="2.10.110.10:FF:000041">
    <property type="entry name" value="LIM and calponin homology domains 1"/>
    <property type="match status" value="1"/>
</dbReference>
<dbReference type="FunFam" id="1.10.418.10:FF:000038">
    <property type="entry name" value="LIM and calponin homology domains-containing protein 1"/>
    <property type="match status" value="1"/>
</dbReference>
<dbReference type="Gene3D" id="1.10.418.10">
    <property type="entry name" value="Calponin-like domain"/>
    <property type="match status" value="1"/>
</dbReference>
<dbReference type="Gene3D" id="2.10.110.10">
    <property type="entry name" value="Cysteine Rich Protein"/>
    <property type="match status" value="1"/>
</dbReference>
<dbReference type="InterPro" id="IPR001997">
    <property type="entry name" value="Calponin/LIMCH1"/>
</dbReference>
<dbReference type="InterPro" id="IPR001715">
    <property type="entry name" value="CH_dom"/>
</dbReference>
<dbReference type="InterPro" id="IPR036872">
    <property type="entry name" value="CH_dom_sf"/>
</dbReference>
<dbReference type="InterPro" id="IPR031865">
    <property type="entry name" value="DUF4757"/>
</dbReference>
<dbReference type="InterPro" id="IPR003096">
    <property type="entry name" value="SM22_calponin"/>
</dbReference>
<dbReference type="InterPro" id="IPR001781">
    <property type="entry name" value="Znf_LIM"/>
</dbReference>
<dbReference type="PANTHER" id="PTHR15551:SF3">
    <property type="entry name" value="LIM AND CALPONIN HOMOLOGY DOMAINS-CONTAINING PROTEIN 1"/>
    <property type="match status" value="1"/>
</dbReference>
<dbReference type="PANTHER" id="PTHR15551">
    <property type="entry name" value="LIM DOMAIN ONLY 7"/>
    <property type="match status" value="1"/>
</dbReference>
<dbReference type="Pfam" id="PF00307">
    <property type="entry name" value="CH"/>
    <property type="match status" value="1"/>
</dbReference>
<dbReference type="Pfam" id="PF15949">
    <property type="entry name" value="DUF4757"/>
    <property type="match status" value="1"/>
</dbReference>
<dbReference type="Pfam" id="PF00412">
    <property type="entry name" value="LIM"/>
    <property type="match status" value="1"/>
</dbReference>
<dbReference type="PRINTS" id="PR00889">
    <property type="entry name" value="CALPONIN"/>
</dbReference>
<dbReference type="PRINTS" id="PR00888">
    <property type="entry name" value="SM22CALPONIN"/>
</dbReference>
<dbReference type="SMART" id="SM00033">
    <property type="entry name" value="CH"/>
    <property type="match status" value="1"/>
</dbReference>
<dbReference type="SMART" id="SM00132">
    <property type="entry name" value="LIM"/>
    <property type="match status" value="1"/>
</dbReference>
<dbReference type="SUPFAM" id="SSF47576">
    <property type="entry name" value="Calponin-homology domain, CH-domain"/>
    <property type="match status" value="1"/>
</dbReference>
<dbReference type="PROSITE" id="PS50021">
    <property type="entry name" value="CH"/>
    <property type="match status" value="1"/>
</dbReference>
<dbReference type="PROSITE" id="PS00478">
    <property type="entry name" value="LIM_DOMAIN_1"/>
    <property type="match status" value="1"/>
</dbReference>
<dbReference type="PROSITE" id="PS50023">
    <property type="entry name" value="LIM_DOMAIN_2"/>
    <property type="match status" value="1"/>
</dbReference>